<organism>
    <name type="scientific">Pongo abelii</name>
    <name type="common">Sumatran orangutan</name>
    <name type="synonym">Pongo pygmaeus abelii</name>
    <dbReference type="NCBI Taxonomy" id="9601"/>
    <lineage>
        <taxon>Eukaryota</taxon>
        <taxon>Metazoa</taxon>
        <taxon>Chordata</taxon>
        <taxon>Craniata</taxon>
        <taxon>Vertebrata</taxon>
        <taxon>Euteleostomi</taxon>
        <taxon>Mammalia</taxon>
        <taxon>Eutheria</taxon>
        <taxon>Euarchontoglires</taxon>
        <taxon>Primates</taxon>
        <taxon>Haplorrhini</taxon>
        <taxon>Catarrhini</taxon>
        <taxon>Hominidae</taxon>
        <taxon>Pongo</taxon>
    </lineage>
</organism>
<evidence type="ECO:0000250" key="1">
    <source>
        <dbReference type="UniProtKB" id="Q8NEF9"/>
    </source>
</evidence>
<evidence type="ECO:0000250" key="2">
    <source>
        <dbReference type="UniProtKB" id="Q9CZ91"/>
    </source>
</evidence>
<evidence type="ECO:0000255" key="3"/>
<evidence type="ECO:0000256" key="4">
    <source>
        <dbReference type="SAM" id="MobiDB-lite"/>
    </source>
</evidence>
<evidence type="ECO:0000312" key="5">
    <source>
        <dbReference type="EMBL" id="CAI29721.1"/>
    </source>
</evidence>
<reference evidence="5" key="1">
    <citation type="submission" date="2004-11" db="EMBL/GenBank/DDBJ databases">
        <authorList>
            <consortium name="The German cDNA consortium"/>
        </authorList>
    </citation>
    <scope>NUCLEOTIDE SEQUENCE [LARGE SCALE MRNA]</scope>
    <source>
        <tissue evidence="5">Brain cortex</tissue>
    </source>
</reference>
<protein>
    <recommendedName>
        <fullName>Serum response factor-binding protein 1</fullName>
    </recommendedName>
    <alternativeName>
        <fullName>SRF-dependent transcription regulation-associated protein</fullName>
    </alternativeName>
</protein>
<feature type="initiator methionine" description="Removed" evidence="1">
    <location>
        <position position="1"/>
    </location>
</feature>
<feature type="chain" id="PRO_0000320008" description="Serum response factor-binding protein 1">
    <location>
        <begin position="2"/>
        <end position="429"/>
    </location>
</feature>
<feature type="region of interest" description="Disordered" evidence="4">
    <location>
        <begin position="128"/>
        <end position="285"/>
    </location>
</feature>
<feature type="region of interest" description="Disordered" evidence="4">
    <location>
        <begin position="311"/>
        <end position="429"/>
    </location>
</feature>
<feature type="coiled-coil region" evidence="3">
    <location>
        <begin position="42"/>
        <end position="67"/>
    </location>
</feature>
<feature type="coiled-coil region" evidence="3">
    <location>
        <begin position="108"/>
        <end position="144"/>
    </location>
</feature>
<feature type="compositionally biased region" description="Polar residues" evidence="4">
    <location>
        <begin position="128"/>
        <end position="138"/>
    </location>
</feature>
<feature type="compositionally biased region" description="Polar residues" evidence="4">
    <location>
        <begin position="146"/>
        <end position="160"/>
    </location>
</feature>
<feature type="compositionally biased region" description="Basic and acidic residues" evidence="4">
    <location>
        <begin position="183"/>
        <end position="195"/>
    </location>
</feature>
<feature type="compositionally biased region" description="Acidic residues" evidence="4">
    <location>
        <begin position="249"/>
        <end position="265"/>
    </location>
</feature>
<feature type="compositionally biased region" description="Basic and acidic residues" evidence="4">
    <location>
        <begin position="311"/>
        <end position="341"/>
    </location>
</feature>
<feature type="compositionally biased region" description="Basic and acidic residues" evidence="4">
    <location>
        <begin position="357"/>
        <end position="367"/>
    </location>
</feature>
<feature type="compositionally biased region" description="Polar residues" evidence="4">
    <location>
        <begin position="373"/>
        <end position="383"/>
    </location>
</feature>
<feature type="modified residue" description="N-acetylalanine" evidence="1">
    <location>
        <position position="2"/>
    </location>
</feature>
<feature type="modified residue" description="Phosphoserine" evidence="1">
    <location>
        <position position="203"/>
    </location>
</feature>
<feature type="modified residue" description="Phosphoserine" evidence="1">
    <location>
        <position position="205"/>
    </location>
</feature>
<feature type="modified residue" description="Phosphoserine" evidence="1">
    <location>
        <position position="264"/>
    </location>
</feature>
<feature type="modified residue" description="Phosphoserine" evidence="1">
    <location>
        <position position="279"/>
    </location>
</feature>
<feature type="modified residue" description="Phosphoserine" evidence="1">
    <location>
        <position position="281"/>
    </location>
</feature>
<feature type="modified residue" description="Phosphoserine" evidence="1">
    <location>
        <position position="349"/>
    </location>
</feature>
<feature type="modified residue" description="Phosphoserine" evidence="1">
    <location>
        <position position="351"/>
    </location>
</feature>
<feature type="modified residue" description="Phosphoserine" evidence="1">
    <location>
        <position position="367"/>
    </location>
</feature>
<feature type="cross-link" description="Glycyl lysine isopeptide (Lys-Gly) (interchain with G-Cter in SUMO2)" evidence="1">
    <location>
        <position position="190"/>
    </location>
</feature>
<feature type="cross-link" description="Glycyl lysine isopeptide (Lys-Gly) (interchain with G-Cter in SUMO2)" evidence="1">
    <location>
        <position position="316"/>
    </location>
</feature>
<comment type="function">
    <text evidence="2">May be involved in regulating transcriptional activation of cardiac genes during the aging process. May play a role in biosynthesis and/or processing of SLC2A4 in adipose cells (By similarity).</text>
</comment>
<comment type="subunit">
    <text evidence="2">Interacts with SRF. Forms complexes with SRF and SRF cofactors ARID2, MYOCD and NKX2-5. Interacts with the N-terminus of SLC2A4 (By similarity).</text>
</comment>
<comment type="subcellular location">
    <subcellularLocation>
        <location evidence="2">Cytoplasm</location>
        <location evidence="2">Perinuclear region</location>
    </subcellularLocation>
</comment>
<dbReference type="EMBL" id="CR926095">
    <property type="protein sequence ID" value="CAI29721.1"/>
    <property type="molecule type" value="mRNA"/>
</dbReference>
<dbReference type="RefSeq" id="NP_001127116.1">
    <property type="nucleotide sequence ID" value="NM_001133644.1"/>
</dbReference>
<dbReference type="SMR" id="Q5NVE2"/>
<dbReference type="FunCoup" id="Q5NVE2">
    <property type="interactions" value="3090"/>
</dbReference>
<dbReference type="STRING" id="9601.ENSPPYP00000017575"/>
<dbReference type="GeneID" id="100174161"/>
<dbReference type="KEGG" id="pon:100174161"/>
<dbReference type="CTD" id="153443"/>
<dbReference type="eggNOG" id="ENOG502QV1I">
    <property type="taxonomic scope" value="Eukaryota"/>
</dbReference>
<dbReference type="InParanoid" id="Q5NVE2"/>
<dbReference type="OrthoDB" id="3364872at2759"/>
<dbReference type="Proteomes" id="UP000001595">
    <property type="component" value="Unplaced"/>
</dbReference>
<dbReference type="GO" id="GO:0030686">
    <property type="term" value="C:90S preribosome"/>
    <property type="evidence" value="ECO:0007669"/>
    <property type="project" value="TreeGrafter"/>
</dbReference>
<dbReference type="GO" id="GO:0005634">
    <property type="term" value="C:nucleus"/>
    <property type="evidence" value="ECO:0007669"/>
    <property type="project" value="TreeGrafter"/>
</dbReference>
<dbReference type="GO" id="GO:0048471">
    <property type="term" value="C:perinuclear region of cytoplasm"/>
    <property type="evidence" value="ECO:0007669"/>
    <property type="project" value="UniProtKB-SubCell"/>
</dbReference>
<dbReference type="GO" id="GO:0030490">
    <property type="term" value="P:maturation of SSU-rRNA"/>
    <property type="evidence" value="ECO:0007669"/>
    <property type="project" value="TreeGrafter"/>
</dbReference>
<dbReference type="InterPro" id="IPR037393">
    <property type="entry name" value="Bud22/SRFB1"/>
</dbReference>
<dbReference type="InterPro" id="IPR015158">
    <property type="entry name" value="Bud22_dom"/>
</dbReference>
<dbReference type="PANTHER" id="PTHR23325">
    <property type="entry name" value="SERUM RESPONSE FACTOR-BINDING"/>
    <property type="match status" value="1"/>
</dbReference>
<dbReference type="PANTHER" id="PTHR23325:SF1">
    <property type="entry name" value="SERUM RESPONSE FACTOR-BINDING PROTEIN 1"/>
    <property type="match status" value="1"/>
</dbReference>
<dbReference type="Pfam" id="PF09073">
    <property type="entry name" value="BUD22"/>
    <property type="match status" value="1"/>
</dbReference>
<gene>
    <name evidence="1" type="primary">SRFBP1</name>
</gene>
<sequence length="429" mass="48856">MAQPGTLNLNNEVVKMRKEVKRIRVLVIRKLVRSVGRLKSKKGTEDALLKNQRRAQRLLEEIHAMKELKPDMVTKSALGDDINFEKICKKPDSTATERAIARLAVHPLLKKKIDVLKAAVQAFKEARQNVTEVESSKNASEDNHSKNTLYSNDNGSNLQREGTVISEQEVKETKILAKKPIHNSKEKIAKMEHGPKAVTIANSPSKPSEKDSVISLESQKTPADPKLKTLSQTKKNKESDSSLSGNSDGGEELCEEEKEYFDDSTEERFYKQSSMSEDSDSGDDFFIGKVRRTRKKESSCHSSVKEQKRLEKVFLKEDTGETHGDTRNDKTKPSTETRKLESVFFHSLSGSKSSRRNFKEQAPKTRSLDFPQNEPQFKNQFNKKLSRRLENTKQQLQLPLHPSWEASRRRKEQQSNIAVFQGKKITFDD</sequence>
<accession>Q5NVE2</accession>
<proteinExistence type="evidence at transcript level"/>
<keyword id="KW-0007">Acetylation</keyword>
<keyword id="KW-0175">Coiled coil</keyword>
<keyword id="KW-0963">Cytoplasm</keyword>
<keyword id="KW-1017">Isopeptide bond</keyword>
<keyword id="KW-0597">Phosphoprotein</keyword>
<keyword id="KW-1185">Reference proteome</keyword>
<keyword id="KW-0804">Transcription</keyword>
<keyword id="KW-0805">Transcription regulation</keyword>
<keyword id="KW-0832">Ubl conjugation</keyword>
<name>SRFB1_PONAB</name>